<name>HSLU_MAGMM</name>
<gene>
    <name evidence="1" type="primary">hslU</name>
    <name type="ordered locus">Mmc1_0015</name>
</gene>
<protein>
    <recommendedName>
        <fullName evidence="1">ATP-dependent protease ATPase subunit HslU</fullName>
    </recommendedName>
    <alternativeName>
        <fullName evidence="1">Unfoldase HslU</fullName>
    </alternativeName>
</protein>
<organism>
    <name type="scientific">Magnetococcus marinus (strain ATCC BAA-1437 / JCM 17883 / MC-1)</name>
    <dbReference type="NCBI Taxonomy" id="156889"/>
    <lineage>
        <taxon>Bacteria</taxon>
        <taxon>Pseudomonadati</taxon>
        <taxon>Pseudomonadota</taxon>
        <taxon>Alphaproteobacteria</taxon>
        <taxon>Magnetococcales</taxon>
        <taxon>Magnetococcaceae</taxon>
        <taxon>Magnetococcus</taxon>
    </lineage>
</organism>
<dbReference type="EMBL" id="CP000471">
    <property type="protein sequence ID" value="ABK42544.1"/>
    <property type="molecule type" value="Genomic_DNA"/>
</dbReference>
<dbReference type="RefSeq" id="WP_011711718.1">
    <property type="nucleotide sequence ID" value="NC_008576.1"/>
</dbReference>
<dbReference type="SMR" id="A0L3K1"/>
<dbReference type="STRING" id="156889.Mmc1_0015"/>
<dbReference type="KEGG" id="mgm:Mmc1_0015"/>
<dbReference type="eggNOG" id="COG1220">
    <property type="taxonomic scope" value="Bacteria"/>
</dbReference>
<dbReference type="HOGENOM" id="CLU_033123_0_0_5"/>
<dbReference type="OrthoDB" id="9804062at2"/>
<dbReference type="Proteomes" id="UP000002586">
    <property type="component" value="Chromosome"/>
</dbReference>
<dbReference type="GO" id="GO:0009376">
    <property type="term" value="C:HslUV protease complex"/>
    <property type="evidence" value="ECO:0007669"/>
    <property type="project" value="UniProtKB-UniRule"/>
</dbReference>
<dbReference type="GO" id="GO:0005524">
    <property type="term" value="F:ATP binding"/>
    <property type="evidence" value="ECO:0007669"/>
    <property type="project" value="UniProtKB-UniRule"/>
</dbReference>
<dbReference type="GO" id="GO:0016887">
    <property type="term" value="F:ATP hydrolysis activity"/>
    <property type="evidence" value="ECO:0007669"/>
    <property type="project" value="InterPro"/>
</dbReference>
<dbReference type="GO" id="GO:0008233">
    <property type="term" value="F:peptidase activity"/>
    <property type="evidence" value="ECO:0007669"/>
    <property type="project" value="InterPro"/>
</dbReference>
<dbReference type="GO" id="GO:0036402">
    <property type="term" value="F:proteasome-activating activity"/>
    <property type="evidence" value="ECO:0007669"/>
    <property type="project" value="UniProtKB-UniRule"/>
</dbReference>
<dbReference type="GO" id="GO:0043335">
    <property type="term" value="P:protein unfolding"/>
    <property type="evidence" value="ECO:0007669"/>
    <property type="project" value="UniProtKB-UniRule"/>
</dbReference>
<dbReference type="GO" id="GO:0051603">
    <property type="term" value="P:proteolysis involved in protein catabolic process"/>
    <property type="evidence" value="ECO:0007669"/>
    <property type="project" value="TreeGrafter"/>
</dbReference>
<dbReference type="CDD" id="cd19498">
    <property type="entry name" value="RecA-like_HslU"/>
    <property type="match status" value="1"/>
</dbReference>
<dbReference type="FunFam" id="3.40.50.300:FF:000213">
    <property type="entry name" value="ATP-dependent protease ATPase subunit HslU"/>
    <property type="match status" value="1"/>
</dbReference>
<dbReference type="FunFam" id="3.40.50.300:FF:000220">
    <property type="entry name" value="ATP-dependent protease ATPase subunit HslU"/>
    <property type="match status" value="1"/>
</dbReference>
<dbReference type="Gene3D" id="1.10.8.60">
    <property type="match status" value="1"/>
</dbReference>
<dbReference type="Gene3D" id="3.40.50.300">
    <property type="entry name" value="P-loop containing nucleotide triphosphate hydrolases"/>
    <property type="match status" value="2"/>
</dbReference>
<dbReference type="HAMAP" id="MF_00249">
    <property type="entry name" value="HslU"/>
    <property type="match status" value="1"/>
</dbReference>
<dbReference type="InterPro" id="IPR003593">
    <property type="entry name" value="AAA+_ATPase"/>
</dbReference>
<dbReference type="InterPro" id="IPR050052">
    <property type="entry name" value="ATP-dep_Clp_protease_ClpX"/>
</dbReference>
<dbReference type="InterPro" id="IPR003959">
    <property type="entry name" value="ATPase_AAA_core"/>
</dbReference>
<dbReference type="InterPro" id="IPR019489">
    <property type="entry name" value="Clp_ATPase_C"/>
</dbReference>
<dbReference type="InterPro" id="IPR004491">
    <property type="entry name" value="HslU"/>
</dbReference>
<dbReference type="InterPro" id="IPR027417">
    <property type="entry name" value="P-loop_NTPase"/>
</dbReference>
<dbReference type="NCBIfam" id="TIGR00390">
    <property type="entry name" value="hslU"/>
    <property type="match status" value="1"/>
</dbReference>
<dbReference type="NCBIfam" id="NF003544">
    <property type="entry name" value="PRK05201.1"/>
    <property type="match status" value="1"/>
</dbReference>
<dbReference type="PANTHER" id="PTHR48102">
    <property type="entry name" value="ATP-DEPENDENT CLP PROTEASE ATP-BINDING SUBUNIT CLPX-LIKE, MITOCHONDRIAL-RELATED"/>
    <property type="match status" value="1"/>
</dbReference>
<dbReference type="PANTHER" id="PTHR48102:SF3">
    <property type="entry name" value="ATP-DEPENDENT PROTEASE ATPASE SUBUNIT HSLU"/>
    <property type="match status" value="1"/>
</dbReference>
<dbReference type="Pfam" id="PF00004">
    <property type="entry name" value="AAA"/>
    <property type="match status" value="1"/>
</dbReference>
<dbReference type="Pfam" id="PF07724">
    <property type="entry name" value="AAA_2"/>
    <property type="match status" value="1"/>
</dbReference>
<dbReference type="SMART" id="SM00382">
    <property type="entry name" value="AAA"/>
    <property type="match status" value="1"/>
</dbReference>
<dbReference type="SMART" id="SM01086">
    <property type="entry name" value="ClpB_D2-small"/>
    <property type="match status" value="1"/>
</dbReference>
<dbReference type="SUPFAM" id="SSF52540">
    <property type="entry name" value="P-loop containing nucleoside triphosphate hydrolases"/>
    <property type="match status" value="1"/>
</dbReference>
<accession>A0L3K1</accession>
<feature type="chain" id="PRO_1000012759" description="ATP-dependent protease ATPase subunit HslU">
    <location>
        <begin position="1"/>
        <end position="461"/>
    </location>
</feature>
<feature type="region of interest" description="Disordered" evidence="2">
    <location>
        <begin position="157"/>
        <end position="178"/>
    </location>
</feature>
<feature type="binding site" evidence="1">
    <location>
        <position position="18"/>
    </location>
    <ligand>
        <name>ATP</name>
        <dbReference type="ChEBI" id="CHEBI:30616"/>
    </ligand>
</feature>
<feature type="binding site" evidence="1">
    <location>
        <begin position="60"/>
        <end position="65"/>
    </location>
    <ligand>
        <name>ATP</name>
        <dbReference type="ChEBI" id="CHEBI:30616"/>
    </ligand>
</feature>
<feature type="binding site" evidence="1">
    <location>
        <position position="273"/>
    </location>
    <ligand>
        <name>ATP</name>
        <dbReference type="ChEBI" id="CHEBI:30616"/>
    </ligand>
</feature>
<feature type="binding site" evidence="1">
    <location>
        <position position="339"/>
    </location>
    <ligand>
        <name>ATP</name>
        <dbReference type="ChEBI" id="CHEBI:30616"/>
    </ligand>
</feature>
<feature type="binding site" evidence="1">
    <location>
        <position position="411"/>
    </location>
    <ligand>
        <name>ATP</name>
        <dbReference type="ChEBI" id="CHEBI:30616"/>
    </ligand>
</feature>
<comment type="function">
    <text evidence="1">ATPase subunit of a proteasome-like degradation complex; this subunit has chaperone activity. The binding of ATP and its subsequent hydrolysis by HslU are essential for unfolding of protein substrates subsequently hydrolyzed by HslV. HslU recognizes the N-terminal part of its protein substrates and unfolds these before they are guided to HslV for hydrolysis.</text>
</comment>
<comment type="subunit">
    <text evidence="1">A double ring-shaped homohexamer of HslV is capped on each side by a ring-shaped HslU homohexamer. The assembly of the HslU/HslV complex is dependent on binding of ATP.</text>
</comment>
<comment type="subcellular location">
    <subcellularLocation>
        <location evidence="1">Cytoplasm</location>
    </subcellularLocation>
</comment>
<comment type="similarity">
    <text evidence="1">Belongs to the ClpX chaperone family. HslU subfamily.</text>
</comment>
<sequence>MSEFTPREIVSELDRYIIGQNMAKRAVAIALRNRWRRQRLSAEMREEVYPKNILMIGPTGVGKTEIARRLAKLARAPFIKVEATKFTEVGYVGRDVESIVRDLVEMGITMVTEEAKVKVQFQAEDQAEERLLDILLPLPSTGQGEGSAHFGLFGQMEGSSVKPEPTAQQKESRQKMRKMLREGKLDDREIDIDLKEQRRVPMMEVITPQGMEGINLQDMLGGLMGGRTKTRRVKVGEAMKLLTEEEAGKLVDQDTVQQVAIERVEQSGIVFLDELDKVCARGSETRGGDVSREGVQRDLLPLVEGTTVSTKYGMVKSDHILFIASGAFQLAKPSDLLPELQGRLPIRVELESLGKGEFVRILTEPENALTRQYAALMGVENIELVFTDEGIEALAEIATRVNETAENIGARRLHTVMEKLLDELSFSAPDRGGERVVIDAAYVNRQLSDLAADEDLSRFIL</sequence>
<keyword id="KW-0067">ATP-binding</keyword>
<keyword id="KW-0143">Chaperone</keyword>
<keyword id="KW-0963">Cytoplasm</keyword>
<keyword id="KW-0547">Nucleotide-binding</keyword>
<keyword id="KW-1185">Reference proteome</keyword>
<keyword id="KW-0346">Stress response</keyword>
<reference key="1">
    <citation type="journal article" date="2009" name="Appl. Environ. Microbiol.">
        <title>Complete genome sequence of the chemolithoautotrophic marine magnetotactic coccus strain MC-1.</title>
        <authorList>
            <person name="Schubbe S."/>
            <person name="Williams T.J."/>
            <person name="Xie G."/>
            <person name="Kiss H.E."/>
            <person name="Brettin T.S."/>
            <person name="Martinez D."/>
            <person name="Ross C.A."/>
            <person name="Schuler D."/>
            <person name="Cox B.L."/>
            <person name="Nealson K.H."/>
            <person name="Bazylinski D.A."/>
        </authorList>
    </citation>
    <scope>NUCLEOTIDE SEQUENCE [LARGE SCALE GENOMIC DNA]</scope>
    <source>
        <strain>ATCC BAA-1437 / JCM 17883 / MC-1</strain>
    </source>
</reference>
<evidence type="ECO:0000255" key="1">
    <source>
        <dbReference type="HAMAP-Rule" id="MF_00249"/>
    </source>
</evidence>
<evidence type="ECO:0000256" key="2">
    <source>
        <dbReference type="SAM" id="MobiDB-lite"/>
    </source>
</evidence>
<proteinExistence type="inferred from homology"/>